<reference key="1">
    <citation type="journal article" date="1998" name="Science">
        <title>Complete genome sequence of Treponema pallidum, the syphilis spirochete.</title>
        <authorList>
            <person name="Fraser C.M."/>
            <person name="Norris S.J."/>
            <person name="Weinstock G.M."/>
            <person name="White O."/>
            <person name="Sutton G.G."/>
            <person name="Dodson R.J."/>
            <person name="Gwinn M.L."/>
            <person name="Hickey E.K."/>
            <person name="Clayton R.A."/>
            <person name="Ketchum K.A."/>
            <person name="Sodergren E."/>
            <person name="Hardham J.M."/>
            <person name="McLeod M.P."/>
            <person name="Salzberg S.L."/>
            <person name="Peterson J.D."/>
            <person name="Khalak H.G."/>
            <person name="Richardson D.L."/>
            <person name="Howell J.K."/>
            <person name="Chidambaram M."/>
            <person name="Utterback T.R."/>
            <person name="McDonald L.A."/>
            <person name="Artiach P."/>
            <person name="Bowman C."/>
            <person name="Cotton M.D."/>
            <person name="Fujii C."/>
            <person name="Garland S.A."/>
            <person name="Hatch B."/>
            <person name="Horst K."/>
            <person name="Roberts K.M."/>
            <person name="Sandusky M."/>
            <person name="Weidman J.F."/>
            <person name="Smith H.O."/>
            <person name="Venter J.C."/>
        </authorList>
    </citation>
    <scope>NUCLEOTIDE SEQUENCE [LARGE SCALE GENOMIC DNA]</scope>
    <source>
        <strain>Nichols</strain>
    </source>
</reference>
<protein>
    <recommendedName>
        <fullName>Uncharacterized protein TP_0923</fullName>
    </recommendedName>
</protein>
<accession>O83893</accession>
<name>Y923_TREPA</name>
<feature type="chain" id="PRO_0000202352" description="Uncharacterized protein TP_0923">
    <location>
        <begin position="1"/>
        <end position="339"/>
    </location>
</feature>
<proteinExistence type="predicted"/>
<gene>
    <name type="ordered locus">TP_0923</name>
</gene>
<organism>
    <name type="scientific">Treponema pallidum (strain Nichols)</name>
    <dbReference type="NCBI Taxonomy" id="243276"/>
    <lineage>
        <taxon>Bacteria</taxon>
        <taxon>Pseudomonadati</taxon>
        <taxon>Spirochaetota</taxon>
        <taxon>Spirochaetia</taxon>
        <taxon>Spirochaetales</taxon>
        <taxon>Treponemataceae</taxon>
        <taxon>Treponema</taxon>
    </lineage>
</organism>
<dbReference type="EMBL" id="AE000520">
    <property type="protein sequence ID" value="AAC65880.1"/>
    <property type="molecule type" value="Genomic_DNA"/>
</dbReference>
<dbReference type="PIR" id="H71265">
    <property type="entry name" value="H71265"/>
</dbReference>
<dbReference type="RefSeq" id="WP_010882366.1">
    <property type="nucleotide sequence ID" value="NC_000919.1"/>
</dbReference>
<dbReference type="EnsemblBacteria" id="AAC65880">
    <property type="protein sequence ID" value="AAC65880"/>
    <property type="gene ID" value="TP_0923"/>
</dbReference>
<dbReference type="KEGG" id="tpa:TP_0923"/>
<dbReference type="HOGENOM" id="CLU_049323_0_0_12"/>
<dbReference type="Proteomes" id="UP000000811">
    <property type="component" value="Chromosome"/>
</dbReference>
<dbReference type="InterPro" id="IPR013229">
    <property type="entry name" value="PEGA"/>
</dbReference>
<dbReference type="Pfam" id="PF08308">
    <property type="entry name" value="PEGA"/>
    <property type="match status" value="1"/>
</dbReference>
<keyword id="KW-1185">Reference proteome</keyword>
<sequence length="339" mass="36117">MSYSWKVRALCCAGLCVGAGLRAQEGSGIRVRGMPEHAQVTVNGYLCATPEEMVLTPGECEVTVCAFGYTKKTLQVVVEEGSFTVVDGRLDTARLELTDVTAQRAHFNPRDPAGLNTEYVTFRVTKSAKCTVTVKDAEGKXXCEEPVELVELGLNVGGIFGGSNKNSEDVSVSAKVAFEGNVTSDPAMGQLYASALCLYRIVHNNDSSGANKCFMRKGLTFATTCAYGIKGFTVALSGELGASSETGIKKPDFSTDVGLSLKYQNKICSIATYSKCGTTTGSNSDGANSVAGVSVLRAACKSRDGLGEQLRLQRYSYEGWELRASIGYVINTKLRVGRP</sequence>